<protein>
    <recommendedName>
        <fullName>Cytokinin-beta-glucosidase 4</fullName>
        <ecNumber>3.2.1.-</ecNumber>
    </recommendedName>
    <alternativeName>
        <fullName>Protein ROL C 4</fullName>
        <shortName>rolC4-Pg</shortName>
    </alternativeName>
</protein>
<keyword id="KW-0203">Cytokinin biosynthesis</keyword>
<keyword id="KW-0326">Glycosidase</keyword>
<keyword id="KW-0378">Hydrolase</keyword>
<organism>
    <name type="scientific">Panax ginseng</name>
    <name type="common">Korean ginseng</name>
    <dbReference type="NCBI Taxonomy" id="4054"/>
    <lineage>
        <taxon>Eukaryota</taxon>
        <taxon>Viridiplantae</taxon>
        <taxon>Streptophyta</taxon>
        <taxon>Embryophyta</taxon>
        <taxon>Tracheophyta</taxon>
        <taxon>Spermatophyta</taxon>
        <taxon>Magnoliopsida</taxon>
        <taxon>eudicotyledons</taxon>
        <taxon>Gunneridae</taxon>
        <taxon>Pentapetalae</taxon>
        <taxon>asterids</taxon>
        <taxon>campanulids</taxon>
        <taxon>Apiales</taxon>
        <taxon>Araliaceae</taxon>
        <taxon>Panax</taxon>
    </lineage>
</organism>
<evidence type="ECO:0000250" key="1"/>
<feature type="chain" id="PRO_0000421068" description="Cytokinin-beta-glucosidase 4">
    <location>
        <begin position="1"/>
        <end position="180"/>
    </location>
</feature>
<proteinExistence type="inferred from homology"/>
<sequence length="180" mass="20203">MAEDDLCSLFFKLKVEDVTSSDELARHMKNASNERKPLIEPGENQSMDIDEEGGSVGHGLLYLYVDCPTMMLCFYGGSLPYNWMQGALLTNLPPYQHDVTLDEVNRGLRQASGFFGYADPMRSAYFAAFSFPGRVIKLNEQMELTSTKGKCLTFDLYASTQLRFEPGELVRHGECKFAIG</sequence>
<name>ROLC4_PANGI</name>
<comment type="function">
    <text evidence="1">Hydrolyzes cytokinin glucosides thus liberating free cytokinins.</text>
</comment>
<gene>
    <name type="primary">ROLC4</name>
</gene>
<reference key="1">
    <citation type="journal article" date="2009" name="Prikl. Biokhim. Mikrobiol.">
        <title>Stability of the rolC gene and its expression in 15-year-old cell cultures of Panax ginseng.</title>
        <authorList>
            <person name="Kisilev K.V."/>
            <person name="Bulgakov V.P."/>
        </authorList>
    </citation>
    <scope>NUCLEOTIDE SEQUENCE [GENOMIC DNA]</scope>
</reference>
<dbReference type="EC" id="3.2.1.-"/>
<dbReference type="EMBL" id="EU642409">
    <property type="protein sequence ID" value="ACD03675.1"/>
    <property type="molecule type" value="Genomic_DNA"/>
</dbReference>
<dbReference type="SMR" id="B2ZCQ3"/>
<dbReference type="GO" id="GO:0008422">
    <property type="term" value="F:beta-glucosidase activity"/>
    <property type="evidence" value="ECO:0007669"/>
    <property type="project" value="InterPro"/>
</dbReference>
<dbReference type="GO" id="GO:0005975">
    <property type="term" value="P:carbohydrate metabolic process"/>
    <property type="evidence" value="ECO:0007669"/>
    <property type="project" value="InterPro"/>
</dbReference>
<dbReference type="GO" id="GO:0009691">
    <property type="term" value="P:cytokinin biosynthetic process"/>
    <property type="evidence" value="ECO:0007669"/>
    <property type="project" value="UniProtKB-KW"/>
</dbReference>
<dbReference type="InterPro" id="IPR006065">
    <property type="entry name" value="Glyco_hydro_41"/>
</dbReference>
<dbReference type="PRINTS" id="PR00746">
    <property type="entry name" value="GLHYDRLASE41"/>
</dbReference>
<accession>B2ZCQ3</accession>